<proteinExistence type="inferred from homology"/>
<sequence length="478" mass="52356">MSNNIRIEEDLLGTREVPADAYYGVHTLRAIENFYISNNKISDIPEFVRGMVMVKKAAAMANKELQTIPKSVANAIIAACDEVLNNGKCMDQFPVDVYQGGAGTSVNMNTNEVLANIGLELMGHQKGEYQYLNPNDHVNKCQSTNDAYPTGFRIAVYSSLIKLVDAINQLREGFERKAVEFQDILKMGRTQLQDAVPMTLGQEFRAFSILLKEEVKNIQRTAELLLEVNLGATAIGTGLNTPKEYSPLAVKKLAEVTGFPCVPAEDLIEATSDCGAYVMVHGALKRLAVKMSKICNDLRLLSSGPRAGLNEINLPELQAGSSIMPAKVNPVVPEVVNQVCFKVIGNDTTVTMAAEAGQLQLNVMEPVIGQAMFESVHILTNACYNLLEKCINGITANKEVCEGYVYNSIGIVTYLNPFIGHHNGDIVGKICAETGKSVREVVLERGLLTEAELDDIFSVQNLMHPAYKAKRYTDESEQ</sequence>
<reference key="1">
    <citation type="journal article" date="2002" name="Proc. Natl. Acad. Sci. U.S.A.">
        <title>Extensive mosaic structure revealed by the complete genome sequence of uropathogenic Escherichia coli.</title>
        <authorList>
            <person name="Welch R.A."/>
            <person name="Burland V."/>
            <person name="Plunkett G. III"/>
            <person name="Redford P."/>
            <person name="Roesch P."/>
            <person name="Rasko D."/>
            <person name="Buckles E.L."/>
            <person name="Liou S.-R."/>
            <person name="Boutin A."/>
            <person name="Hackett J."/>
            <person name="Stroud D."/>
            <person name="Mayhew G.F."/>
            <person name="Rose D.J."/>
            <person name="Zhou S."/>
            <person name="Schwartz D.C."/>
            <person name="Perna N.T."/>
            <person name="Mobley H.L.T."/>
            <person name="Donnenberg M.S."/>
            <person name="Blattner F.R."/>
        </authorList>
    </citation>
    <scope>NUCLEOTIDE SEQUENCE [LARGE SCALE GENOMIC DNA]</scope>
    <source>
        <strain>CFT073 / ATCC 700928 / UPEC</strain>
    </source>
</reference>
<gene>
    <name type="primary">aspA</name>
    <name type="ordered locus">c5222</name>
</gene>
<dbReference type="EC" id="4.3.1.1" evidence="1"/>
<dbReference type="EMBL" id="AE014075">
    <property type="protein sequence ID" value="AAN83644.1"/>
    <property type="status" value="ALT_INIT"/>
    <property type="molecule type" value="Genomic_DNA"/>
</dbReference>
<dbReference type="RefSeq" id="WP_000069437.1">
    <property type="nucleotide sequence ID" value="NZ_CP051263.1"/>
</dbReference>
<dbReference type="SMR" id="P0AC39"/>
<dbReference type="STRING" id="199310.c5222"/>
<dbReference type="GeneID" id="93777685"/>
<dbReference type="KEGG" id="ecc:c5222"/>
<dbReference type="eggNOG" id="COG1027">
    <property type="taxonomic scope" value="Bacteria"/>
</dbReference>
<dbReference type="HOGENOM" id="CLU_021594_4_0_6"/>
<dbReference type="Proteomes" id="UP000001410">
    <property type="component" value="Chromosome"/>
</dbReference>
<dbReference type="GO" id="GO:0005829">
    <property type="term" value="C:cytosol"/>
    <property type="evidence" value="ECO:0007669"/>
    <property type="project" value="TreeGrafter"/>
</dbReference>
<dbReference type="GO" id="GO:0008797">
    <property type="term" value="F:aspartate ammonia-lyase activity"/>
    <property type="evidence" value="ECO:0007669"/>
    <property type="project" value="UniProtKB-EC"/>
</dbReference>
<dbReference type="GO" id="GO:0006531">
    <property type="term" value="P:aspartate metabolic process"/>
    <property type="evidence" value="ECO:0007669"/>
    <property type="project" value="InterPro"/>
</dbReference>
<dbReference type="GO" id="GO:0006099">
    <property type="term" value="P:tricarboxylic acid cycle"/>
    <property type="evidence" value="ECO:0007669"/>
    <property type="project" value="InterPro"/>
</dbReference>
<dbReference type="CDD" id="cd01357">
    <property type="entry name" value="Aspartase"/>
    <property type="match status" value="1"/>
</dbReference>
<dbReference type="FunFam" id="1.10.40.30:FF:000003">
    <property type="entry name" value="Aspartate ammonia-lyase"/>
    <property type="match status" value="1"/>
</dbReference>
<dbReference type="FunFam" id="1.10.275.10:FF:000001">
    <property type="entry name" value="Fumarate hydratase, mitochondrial"/>
    <property type="match status" value="1"/>
</dbReference>
<dbReference type="FunFam" id="1.20.200.10:FF:000001">
    <property type="entry name" value="Fumarate hydratase, mitochondrial"/>
    <property type="match status" value="1"/>
</dbReference>
<dbReference type="Gene3D" id="1.10.40.30">
    <property type="entry name" value="Fumarase/aspartase (C-terminal domain)"/>
    <property type="match status" value="1"/>
</dbReference>
<dbReference type="Gene3D" id="1.20.200.10">
    <property type="entry name" value="Fumarase/aspartase (Central domain)"/>
    <property type="match status" value="1"/>
</dbReference>
<dbReference type="Gene3D" id="1.10.275.10">
    <property type="entry name" value="Fumarase/aspartase (N-terminal domain)"/>
    <property type="match status" value="1"/>
</dbReference>
<dbReference type="InterPro" id="IPR004708">
    <property type="entry name" value="ApsA"/>
</dbReference>
<dbReference type="InterPro" id="IPR051546">
    <property type="entry name" value="Aspartate_Ammonia-Lyase"/>
</dbReference>
<dbReference type="InterPro" id="IPR024083">
    <property type="entry name" value="Fumarase/histidase_N"/>
</dbReference>
<dbReference type="InterPro" id="IPR018951">
    <property type="entry name" value="Fumarase_C_C"/>
</dbReference>
<dbReference type="InterPro" id="IPR020557">
    <property type="entry name" value="Fumarate_lyase_CS"/>
</dbReference>
<dbReference type="InterPro" id="IPR000362">
    <property type="entry name" value="Fumarate_lyase_fam"/>
</dbReference>
<dbReference type="InterPro" id="IPR022761">
    <property type="entry name" value="Fumarate_lyase_N"/>
</dbReference>
<dbReference type="InterPro" id="IPR008948">
    <property type="entry name" value="L-Aspartase-like"/>
</dbReference>
<dbReference type="NCBIfam" id="TIGR00839">
    <property type="entry name" value="aspA"/>
    <property type="match status" value="1"/>
</dbReference>
<dbReference type="NCBIfam" id="NF008909">
    <property type="entry name" value="PRK12273.1"/>
    <property type="match status" value="1"/>
</dbReference>
<dbReference type="PANTHER" id="PTHR42696">
    <property type="entry name" value="ASPARTATE AMMONIA-LYASE"/>
    <property type="match status" value="1"/>
</dbReference>
<dbReference type="PANTHER" id="PTHR42696:SF2">
    <property type="entry name" value="ASPARTATE AMMONIA-LYASE"/>
    <property type="match status" value="1"/>
</dbReference>
<dbReference type="Pfam" id="PF10415">
    <property type="entry name" value="FumaraseC_C"/>
    <property type="match status" value="1"/>
</dbReference>
<dbReference type="Pfam" id="PF00206">
    <property type="entry name" value="Lyase_1"/>
    <property type="match status" value="1"/>
</dbReference>
<dbReference type="PRINTS" id="PR00145">
    <property type="entry name" value="ARGSUCLYASE"/>
</dbReference>
<dbReference type="PRINTS" id="PR00149">
    <property type="entry name" value="FUMRATELYASE"/>
</dbReference>
<dbReference type="SUPFAM" id="SSF48557">
    <property type="entry name" value="L-aspartase-like"/>
    <property type="match status" value="1"/>
</dbReference>
<dbReference type="PROSITE" id="PS00163">
    <property type="entry name" value="FUMARATE_LYASES"/>
    <property type="match status" value="1"/>
</dbReference>
<evidence type="ECO:0000250" key="1">
    <source>
        <dbReference type="UniProtKB" id="P0AC38"/>
    </source>
</evidence>
<evidence type="ECO:0000250" key="2">
    <source>
        <dbReference type="UniProtKB" id="Q9LCC6"/>
    </source>
</evidence>
<evidence type="ECO:0000305" key="3"/>
<feature type="chain" id="PRO_0000161340" description="Aspartate ammonia-lyase">
    <location>
        <begin position="1"/>
        <end position="478"/>
    </location>
</feature>
<feature type="region of interest" description="SS loop" evidence="2">
    <location>
        <begin position="320"/>
        <end position="329"/>
    </location>
</feature>
<feature type="active site" description="Proton acceptor" evidence="2">
    <location>
        <position position="321"/>
    </location>
</feature>
<feature type="binding site" evidence="2">
    <location>
        <position position="104"/>
    </location>
    <ligand>
        <name>L-aspartate</name>
        <dbReference type="ChEBI" id="CHEBI:29991"/>
    </ligand>
</feature>
<feature type="binding site" evidence="2">
    <location>
        <position position="143"/>
    </location>
    <ligand>
        <name>L-aspartate</name>
        <dbReference type="ChEBI" id="CHEBI:29991"/>
    </ligand>
</feature>
<feature type="binding site" evidence="2">
    <location>
        <position position="144"/>
    </location>
    <ligand>
        <name>L-aspartate</name>
        <dbReference type="ChEBI" id="CHEBI:29991"/>
    </ligand>
</feature>
<feature type="binding site" evidence="2">
    <location>
        <position position="145"/>
    </location>
    <ligand>
        <name>L-aspartate</name>
        <dbReference type="ChEBI" id="CHEBI:29991"/>
    </ligand>
</feature>
<feature type="binding site" evidence="2">
    <location>
        <position position="190"/>
    </location>
    <ligand>
        <name>L-aspartate</name>
        <dbReference type="ChEBI" id="CHEBI:29991"/>
    </ligand>
</feature>
<feature type="binding site" evidence="2">
    <location>
        <position position="322"/>
    </location>
    <ligand>
        <name>L-aspartate</name>
        <dbReference type="ChEBI" id="CHEBI:29991"/>
    </ligand>
</feature>
<feature type="binding site" evidence="2">
    <location>
        <position position="327"/>
    </location>
    <ligand>
        <name>L-aspartate</name>
        <dbReference type="ChEBI" id="CHEBI:29991"/>
    </ligand>
</feature>
<accession>P0AC39</accession>
<accession>P04422</accession>
<accession>P78140</accession>
<organism>
    <name type="scientific">Escherichia coli O6:H1 (strain CFT073 / ATCC 700928 / UPEC)</name>
    <dbReference type="NCBI Taxonomy" id="199310"/>
    <lineage>
        <taxon>Bacteria</taxon>
        <taxon>Pseudomonadati</taxon>
        <taxon>Pseudomonadota</taxon>
        <taxon>Gammaproteobacteria</taxon>
        <taxon>Enterobacterales</taxon>
        <taxon>Enterobacteriaceae</taxon>
        <taxon>Escherichia</taxon>
    </lineage>
</organism>
<comment type="function">
    <text evidence="1">Catalyzes the reversible conversion of L-aspartate to fumarate and ammonia.</text>
</comment>
<comment type="catalytic activity">
    <reaction evidence="1">
        <text>L-aspartate = fumarate + NH4(+)</text>
        <dbReference type="Rhea" id="RHEA:16601"/>
        <dbReference type="ChEBI" id="CHEBI:28938"/>
        <dbReference type="ChEBI" id="CHEBI:29806"/>
        <dbReference type="ChEBI" id="CHEBI:29991"/>
        <dbReference type="EC" id="4.3.1.1"/>
    </reaction>
</comment>
<comment type="subunit">
    <text evidence="1">Homotetramer.</text>
</comment>
<comment type="similarity">
    <text evidence="3">Belongs to the class-II fumarase/aspartase family. Aspartase subfamily.</text>
</comment>
<comment type="sequence caution" evidence="3">
    <conflict type="erroneous initiation">
        <sequence resource="EMBL-CDS" id="AAN83644"/>
    </conflict>
    <text>Extended N-terminus.</text>
</comment>
<keyword id="KW-0456">Lyase</keyword>
<keyword id="KW-1185">Reference proteome</keyword>
<name>ASPA_ECOL6</name>
<protein>
    <recommendedName>
        <fullName evidence="1">Aspartate ammonia-lyase</fullName>
        <shortName evidence="1">Aspartase</shortName>
        <ecNumber evidence="1">4.3.1.1</ecNumber>
    </recommendedName>
</protein>